<proteinExistence type="inferred from homology"/>
<accession>Q6LWL1</accession>
<sequence length="178" mass="19831">MDLLLLLFSALWYILPAYVANAVPCILGGGKPVDFGKNFFDGNRIIGNGVTYRGTFFGILFGIITGILQHFIVILYMGPKSVFNYGLTGYIILSFLLATGALFGDMLGSFIKRRFNLNQGQSAPLLDQITFIIFALLFAYSLYPVPANIIVLLLVISPIIHFSSNIIAYKLHLKKVWW</sequence>
<organism>
    <name type="scientific">Methanococcus maripaludis (strain DSM 14266 / JCM 13030 / NBRC 101832 / S2 / LL)</name>
    <dbReference type="NCBI Taxonomy" id="267377"/>
    <lineage>
        <taxon>Archaea</taxon>
        <taxon>Methanobacteriati</taxon>
        <taxon>Methanobacteriota</taxon>
        <taxon>Methanomada group</taxon>
        <taxon>Methanococci</taxon>
        <taxon>Methanococcales</taxon>
        <taxon>Methanococcaceae</taxon>
        <taxon>Methanococcus</taxon>
    </lineage>
</organism>
<keyword id="KW-1003">Cell membrane</keyword>
<keyword id="KW-0444">Lipid biosynthesis</keyword>
<keyword id="KW-0443">Lipid metabolism</keyword>
<keyword id="KW-0460">Magnesium</keyword>
<keyword id="KW-0472">Membrane</keyword>
<keyword id="KW-0594">Phospholipid biosynthesis</keyword>
<keyword id="KW-1208">Phospholipid metabolism</keyword>
<keyword id="KW-1185">Reference proteome</keyword>
<keyword id="KW-0808">Transferase</keyword>
<keyword id="KW-0812">Transmembrane</keyword>
<keyword id="KW-1133">Transmembrane helix</keyword>
<protein>
    <recommendedName>
        <fullName evidence="1">CDP-archaeol synthase</fullName>
        <ecNumber evidence="1">2.7.7.67</ecNumber>
    </recommendedName>
    <alternativeName>
        <fullName evidence="1">CDP-2,3-bis-(O-geranylgeranyl)-sn-glycerol synthase</fullName>
    </alternativeName>
</protein>
<feature type="chain" id="PRO_5000099307" description="CDP-archaeol synthase">
    <location>
        <begin position="1"/>
        <end position="178"/>
    </location>
</feature>
<feature type="transmembrane region" description="Helical" evidence="1">
    <location>
        <begin position="3"/>
        <end position="23"/>
    </location>
</feature>
<feature type="transmembrane region" description="Helical" evidence="1">
    <location>
        <begin position="56"/>
        <end position="76"/>
    </location>
</feature>
<feature type="transmembrane region" description="Helical" evidence="1">
    <location>
        <begin position="91"/>
        <end position="111"/>
    </location>
</feature>
<feature type="transmembrane region" description="Helical" evidence="1">
    <location>
        <begin position="131"/>
        <end position="151"/>
    </location>
</feature>
<feature type="transmembrane region" description="Helical" evidence="1">
    <location>
        <begin position="152"/>
        <end position="172"/>
    </location>
</feature>
<gene>
    <name evidence="1" type="primary">carS</name>
    <name type="ordered locus">MMP1698</name>
</gene>
<name>CDPAS_METMP</name>
<evidence type="ECO:0000255" key="1">
    <source>
        <dbReference type="HAMAP-Rule" id="MF_01117"/>
    </source>
</evidence>
<dbReference type="EC" id="2.7.7.67" evidence="1"/>
<dbReference type="EMBL" id="BX950229">
    <property type="protein sequence ID" value="CAF31254.1"/>
    <property type="molecule type" value="Genomic_DNA"/>
</dbReference>
<dbReference type="RefSeq" id="WP_011171642.1">
    <property type="nucleotide sequence ID" value="NC_005791.1"/>
</dbReference>
<dbReference type="SMR" id="Q6LWL1"/>
<dbReference type="STRING" id="267377.MMP1698"/>
<dbReference type="EnsemblBacteria" id="CAF31254">
    <property type="protein sequence ID" value="CAF31254"/>
    <property type="gene ID" value="MMP1698"/>
</dbReference>
<dbReference type="GeneID" id="2761628"/>
<dbReference type="KEGG" id="mmp:MMP1698"/>
<dbReference type="PATRIC" id="fig|267377.15.peg.1741"/>
<dbReference type="eggNOG" id="arCOG04106">
    <property type="taxonomic scope" value="Archaea"/>
</dbReference>
<dbReference type="HOGENOM" id="CLU_105710_0_0_2"/>
<dbReference type="OrthoDB" id="45383at2157"/>
<dbReference type="UniPathway" id="UPA00940"/>
<dbReference type="Proteomes" id="UP000000590">
    <property type="component" value="Chromosome"/>
</dbReference>
<dbReference type="GO" id="GO:0005886">
    <property type="term" value="C:plasma membrane"/>
    <property type="evidence" value="ECO:0007669"/>
    <property type="project" value="UniProtKB-SubCell"/>
</dbReference>
<dbReference type="GO" id="GO:0043338">
    <property type="term" value="F:CDP-2,3-bis-(O-geranylgeranyl)-sn-glycerol synthase activity"/>
    <property type="evidence" value="ECO:0007669"/>
    <property type="project" value="UniProtKB-EC"/>
</dbReference>
<dbReference type="GO" id="GO:0046474">
    <property type="term" value="P:glycerophospholipid biosynthetic process"/>
    <property type="evidence" value="ECO:0007669"/>
    <property type="project" value="UniProtKB-UniRule"/>
</dbReference>
<dbReference type="HAMAP" id="MF_01117">
    <property type="entry name" value="CDP_archaeol_synth"/>
    <property type="match status" value="1"/>
</dbReference>
<dbReference type="InterPro" id="IPR032690">
    <property type="entry name" value="CarS"/>
</dbReference>
<dbReference type="InterPro" id="IPR002726">
    <property type="entry name" value="CarS_archaea"/>
</dbReference>
<dbReference type="NCBIfam" id="NF003114">
    <property type="entry name" value="PRK04032.1"/>
    <property type="match status" value="1"/>
</dbReference>
<dbReference type="PANTHER" id="PTHR39650">
    <property type="entry name" value="CDP-ARCHAEOL SYNTHASE"/>
    <property type="match status" value="1"/>
</dbReference>
<dbReference type="PANTHER" id="PTHR39650:SF1">
    <property type="entry name" value="CDP-ARCHAEOL SYNTHASE"/>
    <property type="match status" value="1"/>
</dbReference>
<dbReference type="Pfam" id="PF01864">
    <property type="entry name" value="CarS-like"/>
    <property type="match status" value="1"/>
</dbReference>
<reference key="1">
    <citation type="journal article" date="2004" name="J. Bacteriol.">
        <title>Complete genome sequence of the genetically tractable hydrogenotrophic methanogen Methanococcus maripaludis.</title>
        <authorList>
            <person name="Hendrickson E.L."/>
            <person name="Kaul R."/>
            <person name="Zhou Y."/>
            <person name="Bovee D."/>
            <person name="Chapman P."/>
            <person name="Chung J."/>
            <person name="Conway de Macario E."/>
            <person name="Dodsworth J.A."/>
            <person name="Gillett W."/>
            <person name="Graham D.E."/>
            <person name="Hackett M."/>
            <person name="Haydock A.K."/>
            <person name="Kang A."/>
            <person name="Land M.L."/>
            <person name="Levy R."/>
            <person name="Lie T.J."/>
            <person name="Major T.A."/>
            <person name="Moore B.C."/>
            <person name="Porat I."/>
            <person name="Palmeiri A."/>
            <person name="Rouse G."/>
            <person name="Saenphimmachak C."/>
            <person name="Soell D."/>
            <person name="Van Dien S."/>
            <person name="Wang T."/>
            <person name="Whitman W.B."/>
            <person name="Xia Q."/>
            <person name="Zhang Y."/>
            <person name="Larimer F.W."/>
            <person name="Olson M.V."/>
            <person name="Leigh J.A."/>
        </authorList>
    </citation>
    <scope>NUCLEOTIDE SEQUENCE [LARGE SCALE GENOMIC DNA]</scope>
    <source>
        <strain>DSM 14266 / JCM 13030 / NBRC 101832 / S2 / LL</strain>
    </source>
</reference>
<comment type="function">
    <text evidence="1">Catalyzes the formation of CDP-2,3-bis-(O-geranylgeranyl)-sn-glycerol (CDP-archaeol) from 2,3-bis-(O-geranylgeranyl)-sn-glycerol 1-phosphate (DGGGP) and CTP. This reaction is the third ether-bond-formation step in the biosynthesis of archaeal membrane lipids.</text>
</comment>
<comment type="catalytic activity">
    <reaction evidence="1">
        <text>2,3-bis-O-(geranylgeranyl)-sn-glycerol 1-phosphate + CTP + H(+) = CDP-2,3-bis-O-(geranylgeranyl)-sn-glycerol + diphosphate</text>
        <dbReference type="Rhea" id="RHEA:25690"/>
        <dbReference type="ChEBI" id="CHEBI:15378"/>
        <dbReference type="ChEBI" id="CHEBI:33019"/>
        <dbReference type="ChEBI" id="CHEBI:37563"/>
        <dbReference type="ChEBI" id="CHEBI:58837"/>
        <dbReference type="ChEBI" id="CHEBI:58838"/>
        <dbReference type="EC" id="2.7.7.67"/>
    </reaction>
</comment>
<comment type="cofactor">
    <cofactor evidence="1">
        <name>Mg(2+)</name>
        <dbReference type="ChEBI" id="CHEBI:18420"/>
    </cofactor>
</comment>
<comment type="pathway">
    <text evidence="1">Membrane lipid metabolism; glycerophospholipid metabolism.</text>
</comment>
<comment type="subcellular location">
    <subcellularLocation>
        <location evidence="1">Cell membrane</location>
        <topology evidence="1">Multi-pass membrane protein</topology>
    </subcellularLocation>
</comment>
<comment type="similarity">
    <text evidence="1">Belongs to the CDP-archaeol synthase family.</text>
</comment>